<name>TLDD_BUCAI</name>
<proteinExistence type="inferred from homology"/>
<protein>
    <recommendedName>
        <fullName>Metalloprotease TldD homolog</fullName>
        <ecNumber>3.4.-.-</ecNumber>
    </recommendedName>
</protein>
<gene>
    <name type="primary">tldD</name>
    <name type="ordered locus">BU398</name>
</gene>
<organism>
    <name type="scientific">Buchnera aphidicola subsp. Acyrthosiphon pisum (strain APS)</name>
    <name type="common">Acyrthosiphon pisum symbiotic bacterium</name>
    <dbReference type="NCBI Taxonomy" id="107806"/>
    <lineage>
        <taxon>Bacteria</taxon>
        <taxon>Pseudomonadati</taxon>
        <taxon>Pseudomonadota</taxon>
        <taxon>Gammaproteobacteria</taxon>
        <taxon>Enterobacterales</taxon>
        <taxon>Erwiniaceae</taxon>
        <taxon>Buchnera</taxon>
    </lineage>
</organism>
<comment type="function">
    <text evidence="1">Probable metalloprotease.</text>
</comment>
<comment type="similarity">
    <text evidence="2">Belongs to the peptidase U62 family.</text>
</comment>
<sequence length="483" mass="52977">MTFELVTESLLNANKINDQDVFIALEELCTRQLDYGDLYFQSHIHESWILENSIIKEGNYHSDAGIGVRAIRGESTGFAYSDQISLDSLRRSTKKAHSIILTKGSGKTKTLSKKTIEPIYKNVNPLEGFSSKEKTDLLYRANYIARSLDHRVIEVNASLTGSYEQILVASTDGNLVSDIRPSIQFSISVLVEDHGKRERGRSGGGSRTDYNFFLNQDDSSKEIRIDHWSKEAVRIALLNLSSKEALSGTFPVVLGSGWPGVLLHEAIGHGLEGDFNRKGTSIFTNMIGKKVASELCTIIDDGTIKNQRGSLSIDDEGTPGQKNILIENGILKKYMQDKLNARLMGVKSTGNGRRESYSCLPMPRMTNTYMLSGKSKLDDIIKSVDYGIYAVNFSGGQVDITSGKFVFSTSEAYLIKNGKIVTPIKNTTLIGSGLEVMQKISMVGDDLKMDEGMGICGKDGQNIPVGIGQPSMKLENLTIGGTV</sequence>
<feature type="chain" id="PRO_0000142354" description="Metalloprotease TldD homolog">
    <location>
        <begin position="1"/>
        <end position="483"/>
    </location>
</feature>
<accession>P57478</accession>
<evidence type="ECO:0000250" key="1"/>
<evidence type="ECO:0000305" key="2"/>
<reference key="1">
    <citation type="journal article" date="2000" name="Nature">
        <title>Genome sequence of the endocellular bacterial symbiont of aphids Buchnera sp. APS.</title>
        <authorList>
            <person name="Shigenobu S."/>
            <person name="Watanabe H."/>
            <person name="Hattori M."/>
            <person name="Sakaki Y."/>
            <person name="Ishikawa H."/>
        </authorList>
    </citation>
    <scope>NUCLEOTIDE SEQUENCE [LARGE SCALE GENOMIC DNA]</scope>
    <source>
        <strain>APS</strain>
    </source>
</reference>
<keyword id="KW-0378">Hydrolase</keyword>
<keyword id="KW-0482">Metalloprotease</keyword>
<keyword id="KW-0645">Protease</keyword>
<keyword id="KW-1185">Reference proteome</keyword>
<dbReference type="EC" id="3.4.-.-"/>
<dbReference type="EMBL" id="BA000003">
    <property type="protein sequence ID" value="BAB13101.1"/>
    <property type="molecule type" value="Genomic_DNA"/>
</dbReference>
<dbReference type="RefSeq" id="NP_240215.1">
    <property type="nucleotide sequence ID" value="NC_002528.1"/>
</dbReference>
<dbReference type="RefSeq" id="WP_010896099.1">
    <property type="nucleotide sequence ID" value="NC_002528.1"/>
</dbReference>
<dbReference type="SMR" id="P57478"/>
<dbReference type="STRING" id="563178.BUAP5A_391"/>
<dbReference type="EnsemblBacteria" id="BAB13101">
    <property type="protein sequence ID" value="BAB13101"/>
    <property type="gene ID" value="BAB13101"/>
</dbReference>
<dbReference type="KEGG" id="buc:BU398"/>
<dbReference type="PATRIC" id="fig|107806.10.peg.412"/>
<dbReference type="eggNOG" id="COG0312">
    <property type="taxonomic scope" value="Bacteria"/>
</dbReference>
<dbReference type="HOGENOM" id="CLU_026425_1_0_6"/>
<dbReference type="Proteomes" id="UP000001806">
    <property type="component" value="Chromosome"/>
</dbReference>
<dbReference type="GO" id="GO:0005829">
    <property type="term" value="C:cytosol"/>
    <property type="evidence" value="ECO:0007669"/>
    <property type="project" value="TreeGrafter"/>
</dbReference>
<dbReference type="GO" id="GO:0008237">
    <property type="term" value="F:metallopeptidase activity"/>
    <property type="evidence" value="ECO:0007669"/>
    <property type="project" value="UniProtKB-KW"/>
</dbReference>
<dbReference type="GO" id="GO:0006508">
    <property type="term" value="P:proteolysis"/>
    <property type="evidence" value="ECO:0007669"/>
    <property type="project" value="UniProtKB-KW"/>
</dbReference>
<dbReference type="Gene3D" id="3.30.2290.10">
    <property type="entry name" value="PmbA/TldD superfamily"/>
    <property type="match status" value="1"/>
</dbReference>
<dbReference type="InterPro" id="IPR045569">
    <property type="entry name" value="Metalloprtase-TldD/E_C"/>
</dbReference>
<dbReference type="InterPro" id="IPR045570">
    <property type="entry name" value="Metalloprtase-TldD/E_cen_dom"/>
</dbReference>
<dbReference type="InterPro" id="IPR002510">
    <property type="entry name" value="Metalloprtase-TldD/E_N"/>
</dbReference>
<dbReference type="InterPro" id="IPR051463">
    <property type="entry name" value="Peptidase_U62_metallo"/>
</dbReference>
<dbReference type="InterPro" id="IPR025502">
    <property type="entry name" value="TldD"/>
</dbReference>
<dbReference type="InterPro" id="IPR035068">
    <property type="entry name" value="TldD/PmbA_N"/>
</dbReference>
<dbReference type="InterPro" id="IPR036059">
    <property type="entry name" value="TldD/PmbA_sf"/>
</dbReference>
<dbReference type="NCBIfam" id="NF008006">
    <property type="entry name" value="PRK10735.1"/>
    <property type="match status" value="1"/>
</dbReference>
<dbReference type="PANTHER" id="PTHR30624:SF4">
    <property type="entry name" value="METALLOPROTEASE TLDD"/>
    <property type="match status" value="1"/>
</dbReference>
<dbReference type="PANTHER" id="PTHR30624">
    <property type="entry name" value="UNCHARACTERIZED PROTEIN TLDD AND PMBA"/>
    <property type="match status" value="1"/>
</dbReference>
<dbReference type="Pfam" id="PF01523">
    <property type="entry name" value="PmbA_TldD_1st"/>
    <property type="match status" value="1"/>
</dbReference>
<dbReference type="Pfam" id="PF19290">
    <property type="entry name" value="PmbA_TldD_2nd"/>
    <property type="match status" value="1"/>
</dbReference>
<dbReference type="Pfam" id="PF19289">
    <property type="entry name" value="PmbA_TldD_3rd"/>
    <property type="match status" value="1"/>
</dbReference>
<dbReference type="PIRSF" id="PIRSF004919">
    <property type="entry name" value="TldD"/>
    <property type="match status" value="1"/>
</dbReference>
<dbReference type="SUPFAM" id="SSF111283">
    <property type="entry name" value="Putative modulator of DNA gyrase, PmbA/TldD"/>
    <property type="match status" value="1"/>
</dbReference>